<name>RS21_SUBDO</name>
<protein>
    <recommendedName>
        <fullName evidence="3">Small ribosomal subunit protein eS21</fullName>
    </recommendedName>
    <alternativeName>
        <fullName>40S ribosomal protein S21</fullName>
    </alternativeName>
</protein>
<proteinExistence type="inferred from homology"/>
<organism>
    <name type="scientific">Suberites domuncula</name>
    <name type="common">Sponge</name>
    <dbReference type="NCBI Taxonomy" id="55567"/>
    <lineage>
        <taxon>Eukaryota</taxon>
        <taxon>Metazoa</taxon>
        <taxon>Porifera</taxon>
        <taxon>Demospongiae</taxon>
        <taxon>Heteroscleromorpha</taxon>
        <taxon>Suberitida</taxon>
        <taxon>Suberitidae</taxon>
        <taxon>Suberites</taxon>
    </lineage>
</organism>
<gene>
    <name type="primary">RPS21</name>
</gene>
<evidence type="ECO:0000250" key="1">
    <source>
        <dbReference type="UniProtKB" id="P63220"/>
    </source>
</evidence>
<evidence type="ECO:0000250" key="2">
    <source>
        <dbReference type="UniProtKB" id="P63221"/>
    </source>
</evidence>
<evidence type="ECO:0000305" key="3"/>
<feature type="chain" id="PRO_0000194749" description="Small ribosomal subunit protein eS21">
    <location>
        <begin position="1"/>
        <end position="86"/>
    </location>
</feature>
<keyword id="KW-0963">Cytoplasm</keyword>
<keyword id="KW-0256">Endoplasmic reticulum</keyword>
<keyword id="KW-0687">Ribonucleoprotein</keyword>
<keyword id="KW-0689">Ribosomal protein</keyword>
<reference key="1">
    <citation type="journal article" date="2006" name="Gene">
        <title>The complete set of ribosomal proteins from the marine sponge Suberites domuncula.</title>
        <authorList>
            <person name="Perina D."/>
            <person name="Cetkovic H."/>
            <person name="Harcet M."/>
            <person name="Premzl M."/>
            <person name="Lukic-Bilela L."/>
            <person name="Mueller W.E.G."/>
            <person name="Gamulin V."/>
        </authorList>
    </citation>
    <scope>NUCLEOTIDE SEQUENCE [MRNA]</scope>
</reference>
<accession>Q4KTC0</accession>
<comment type="subunit">
    <text evidence="1">Component of the 40S small ribosomal subunit.</text>
</comment>
<comment type="subcellular location">
    <subcellularLocation>
        <location evidence="1">Cytoplasm</location>
        <location evidence="1">Cytosol</location>
    </subcellularLocation>
    <subcellularLocation>
        <location evidence="1">Cytoplasm</location>
    </subcellularLocation>
    <subcellularLocation>
        <location evidence="2">Rough endoplasmic reticulum</location>
    </subcellularLocation>
    <text evidence="1 2">Detected on cytosolic polysomes (By similarity). Detected in ribosomes that are associated with the rough endoplasmic reticulum (By similarity).</text>
</comment>
<comment type="similarity">
    <text evidence="3">Belongs to the eukaryotic ribosomal protein eS21 family.</text>
</comment>
<dbReference type="EMBL" id="AY857479">
    <property type="protein sequence ID" value="AAX48898.1"/>
    <property type="molecule type" value="mRNA"/>
</dbReference>
<dbReference type="SMR" id="Q4KTC0"/>
<dbReference type="GO" id="GO:0005829">
    <property type="term" value="C:cytosol"/>
    <property type="evidence" value="ECO:0007669"/>
    <property type="project" value="UniProtKB-SubCell"/>
</dbReference>
<dbReference type="GO" id="GO:1990904">
    <property type="term" value="C:ribonucleoprotein complex"/>
    <property type="evidence" value="ECO:0007669"/>
    <property type="project" value="UniProtKB-KW"/>
</dbReference>
<dbReference type="GO" id="GO:0005840">
    <property type="term" value="C:ribosome"/>
    <property type="evidence" value="ECO:0007669"/>
    <property type="project" value="UniProtKB-KW"/>
</dbReference>
<dbReference type="GO" id="GO:0005791">
    <property type="term" value="C:rough endoplasmic reticulum"/>
    <property type="evidence" value="ECO:0007669"/>
    <property type="project" value="UniProtKB-SubCell"/>
</dbReference>
<dbReference type="GO" id="GO:0003735">
    <property type="term" value="F:structural constituent of ribosome"/>
    <property type="evidence" value="ECO:0007669"/>
    <property type="project" value="InterPro"/>
</dbReference>
<dbReference type="GO" id="GO:0006412">
    <property type="term" value="P:translation"/>
    <property type="evidence" value="ECO:0007669"/>
    <property type="project" value="InterPro"/>
</dbReference>
<dbReference type="FunFam" id="3.30.1230.20:FF:000001">
    <property type="entry name" value="40S ribosomal protein S21"/>
    <property type="match status" value="1"/>
</dbReference>
<dbReference type="Gene3D" id="3.30.1230.20">
    <property type="match status" value="1"/>
</dbReference>
<dbReference type="InterPro" id="IPR001931">
    <property type="entry name" value="Ribosomal_eS21"/>
</dbReference>
<dbReference type="InterPro" id="IPR018279">
    <property type="entry name" value="Ribosomal_eS21_CS"/>
</dbReference>
<dbReference type="InterPro" id="IPR038579">
    <property type="entry name" value="Ribosomal_eS21_sf"/>
</dbReference>
<dbReference type="PANTHER" id="PTHR10442">
    <property type="entry name" value="40S RIBOSOMAL PROTEIN S21"/>
    <property type="match status" value="1"/>
</dbReference>
<dbReference type="Pfam" id="PF01249">
    <property type="entry name" value="Ribosomal_S21e"/>
    <property type="match status" value="1"/>
</dbReference>
<dbReference type="PIRSF" id="PIRSF002148">
    <property type="entry name" value="Ribosomal_S21e"/>
    <property type="match status" value="1"/>
</dbReference>
<dbReference type="PROSITE" id="PS00996">
    <property type="entry name" value="RIBOSOMAL_S21E"/>
    <property type="match status" value="1"/>
</dbReference>
<sequence length="86" mass="9242">MQNEAGETVDVYIPRKCSASGRIIGARDYAAVQLNIADVDEKTGRVTGGFKTYAVSGFIRAMGESDDCLHRICTRDGICAGEQPQS</sequence>